<name>RS18_CHLTB</name>
<reference key="1">
    <citation type="journal article" date="2008" name="Genome Res.">
        <title>Chlamydia trachomatis: genome sequence analysis of lymphogranuloma venereum isolates.</title>
        <authorList>
            <person name="Thomson N.R."/>
            <person name="Holden M.T.G."/>
            <person name="Carder C."/>
            <person name="Lennard N."/>
            <person name="Lockey S.J."/>
            <person name="Marsh P."/>
            <person name="Skipp P."/>
            <person name="O'Connor C.D."/>
            <person name="Goodhead I."/>
            <person name="Norbertzcak H."/>
            <person name="Harris B."/>
            <person name="Ormond D."/>
            <person name="Rance R."/>
            <person name="Quail M.A."/>
            <person name="Parkhill J."/>
            <person name="Stephens R.S."/>
            <person name="Clarke I.N."/>
        </authorList>
    </citation>
    <scope>NUCLEOTIDE SEQUENCE [LARGE SCALE GENOMIC DNA]</scope>
    <source>
        <strain>UCH-1/proctitis</strain>
    </source>
</reference>
<comment type="function">
    <text evidence="1">Binds as a heterodimer with protein bS6 to the central domain of the 16S rRNA, where it helps stabilize the platform of the 30S subunit.</text>
</comment>
<comment type="subunit">
    <text evidence="1">Part of the 30S ribosomal subunit. Forms a tight heterodimer with protein bS6.</text>
</comment>
<comment type="similarity">
    <text evidence="1">Belongs to the bacterial ribosomal protein bS18 family.</text>
</comment>
<proteinExistence type="inferred from homology"/>
<keyword id="KW-0687">Ribonucleoprotein</keyword>
<keyword id="KW-0689">Ribosomal protein</keyword>
<keyword id="KW-0694">RNA-binding</keyword>
<keyword id="KW-0699">rRNA-binding</keyword>
<dbReference type="EMBL" id="AM884177">
    <property type="protein sequence ID" value="CAP06570.1"/>
    <property type="molecule type" value="Genomic_DNA"/>
</dbReference>
<dbReference type="RefSeq" id="WP_009872184.1">
    <property type="nucleotide sequence ID" value="NC_010280.2"/>
</dbReference>
<dbReference type="SMR" id="B0BAQ8"/>
<dbReference type="KEGG" id="ctl:CTLon_0172"/>
<dbReference type="HOGENOM" id="CLU_148710_2_2_0"/>
<dbReference type="Proteomes" id="UP001154401">
    <property type="component" value="Chromosome"/>
</dbReference>
<dbReference type="GO" id="GO:0022627">
    <property type="term" value="C:cytosolic small ribosomal subunit"/>
    <property type="evidence" value="ECO:0007669"/>
    <property type="project" value="TreeGrafter"/>
</dbReference>
<dbReference type="GO" id="GO:0070181">
    <property type="term" value="F:small ribosomal subunit rRNA binding"/>
    <property type="evidence" value="ECO:0007669"/>
    <property type="project" value="TreeGrafter"/>
</dbReference>
<dbReference type="GO" id="GO:0003735">
    <property type="term" value="F:structural constituent of ribosome"/>
    <property type="evidence" value="ECO:0007669"/>
    <property type="project" value="InterPro"/>
</dbReference>
<dbReference type="GO" id="GO:0006412">
    <property type="term" value="P:translation"/>
    <property type="evidence" value="ECO:0007669"/>
    <property type="project" value="UniProtKB-UniRule"/>
</dbReference>
<dbReference type="FunFam" id="4.10.640.10:FF:000004">
    <property type="entry name" value="30S ribosomal protein S18"/>
    <property type="match status" value="1"/>
</dbReference>
<dbReference type="Gene3D" id="4.10.640.10">
    <property type="entry name" value="Ribosomal protein S18"/>
    <property type="match status" value="1"/>
</dbReference>
<dbReference type="HAMAP" id="MF_00270">
    <property type="entry name" value="Ribosomal_bS18"/>
    <property type="match status" value="1"/>
</dbReference>
<dbReference type="InterPro" id="IPR001648">
    <property type="entry name" value="Ribosomal_bS18"/>
</dbReference>
<dbReference type="InterPro" id="IPR018275">
    <property type="entry name" value="Ribosomal_bS18_CS"/>
</dbReference>
<dbReference type="InterPro" id="IPR036870">
    <property type="entry name" value="Ribosomal_bS18_sf"/>
</dbReference>
<dbReference type="NCBIfam" id="TIGR00165">
    <property type="entry name" value="S18"/>
    <property type="match status" value="1"/>
</dbReference>
<dbReference type="PANTHER" id="PTHR13479">
    <property type="entry name" value="30S RIBOSOMAL PROTEIN S18"/>
    <property type="match status" value="1"/>
</dbReference>
<dbReference type="PANTHER" id="PTHR13479:SF40">
    <property type="entry name" value="SMALL RIBOSOMAL SUBUNIT PROTEIN BS18M"/>
    <property type="match status" value="1"/>
</dbReference>
<dbReference type="Pfam" id="PF01084">
    <property type="entry name" value="Ribosomal_S18"/>
    <property type="match status" value="1"/>
</dbReference>
<dbReference type="PRINTS" id="PR00974">
    <property type="entry name" value="RIBOSOMALS18"/>
</dbReference>
<dbReference type="SUPFAM" id="SSF46911">
    <property type="entry name" value="Ribosomal protein S18"/>
    <property type="match status" value="1"/>
</dbReference>
<dbReference type="PROSITE" id="PS00057">
    <property type="entry name" value="RIBOSOMAL_S18"/>
    <property type="match status" value="1"/>
</dbReference>
<organism>
    <name type="scientific">Chlamydia trachomatis serovar L2b (strain UCH-1/proctitis)</name>
    <dbReference type="NCBI Taxonomy" id="471473"/>
    <lineage>
        <taxon>Bacteria</taxon>
        <taxon>Pseudomonadati</taxon>
        <taxon>Chlamydiota</taxon>
        <taxon>Chlamydiia</taxon>
        <taxon>Chlamydiales</taxon>
        <taxon>Chlamydiaceae</taxon>
        <taxon>Chlamydia/Chlamydophila group</taxon>
        <taxon>Chlamydia</taxon>
    </lineage>
</organism>
<accession>B0BAQ8</accession>
<evidence type="ECO:0000255" key="1">
    <source>
        <dbReference type="HAMAP-Rule" id="MF_00270"/>
    </source>
</evidence>
<evidence type="ECO:0000305" key="2"/>
<feature type="chain" id="PRO_1000114411" description="Small ribosomal subunit protein bS18">
    <location>
        <begin position="1"/>
        <end position="81"/>
    </location>
</feature>
<sequence>MNRPVHNEHRRKRFAKKCPFVSAGWKTIDYKDVTTLKRFITERGKILPRRITGVSSRFQALLAQAVKRARHVGLLPFVGED</sequence>
<protein>
    <recommendedName>
        <fullName evidence="1">Small ribosomal subunit protein bS18</fullName>
    </recommendedName>
    <alternativeName>
        <fullName evidence="2">30S ribosomal protein S18</fullName>
    </alternativeName>
</protein>
<gene>
    <name evidence="1" type="primary">rpsR</name>
    <name type="ordered locus">CTLon_0172</name>
</gene>